<keyword id="KW-0963">Cytoplasm</keyword>
<keyword id="KW-0274">FAD</keyword>
<keyword id="KW-0285">Flavoprotein</keyword>
<keyword id="KW-0560">Oxidoreductase</keyword>
<keyword id="KW-1185">Reference proteome</keyword>
<feature type="chain" id="PRO_1000064345" description="Crotonobetainyl-CoA reductase">
    <location>
        <begin position="1"/>
        <end position="380"/>
    </location>
</feature>
<sequence>MDFNLNDEQELFVAGIRELMASENWEAYFAECDRDSVYPERFVKALADMGIDSLLIPEEHGGLDAGFVTLAAVWMELGRLGAPTYVLYQLPGGFNTFLREGTQEQIDKIMAFRGTGKQMWNSAITEPGAGSDVGSLKTTYTRRNGKIYLNGSKCFITSSAYTPYIVVMARDGASPDKPVYTEWFVDMSKPGIKVTKLEKLGLRMDSCCEITFDDVELDEKDMFGREGNGFNRVKEEFDHERFLVALTNYGTAMCAFEDAARYANQRVQFGEAIGRFQLIQEKFAHMAIKLNSMKNMLYEAAWKADNGTITSGDAAMCKYFCANAAFEVVDSAMQVLGGVGIAGNHRISRFWRDLRVDRVSGGSDEMQILTLGRAVLKQYR</sequence>
<name>CAIA_ECO24</name>
<proteinExistence type="inferred from homology"/>
<organism>
    <name type="scientific">Escherichia coli O139:H28 (strain E24377A / ETEC)</name>
    <dbReference type="NCBI Taxonomy" id="331111"/>
    <lineage>
        <taxon>Bacteria</taxon>
        <taxon>Pseudomonadati</taxon>
        <taxon>Pseudomonadota</taxon>
        <taxon>Gammaproteobacteria</taxon>
        <taxon>Enterobacterales</taxon>
        <taxon>Enterobacteriaceae</taxon>
        <taxon>Escherichia</taxon>
    </lineage>
</organism>
<dbReference type="EC" id="1.3.8.13" evidence="1"/>
<dbReference type="EMBL" id="CP000800">
    <property type="protein sequence ID" value="ABV17974.1"/>
    <property type="molecule type" value="Genomic_DNA"/>
</dbReference>
<dbReference type="RefSeq" id="WP_000347117.1">
    <property type="nucleotide sequence ID" value="NC_009801.1"/>
</dbReference>
<dbReference type="SMR" id="A7ZHD0"/>
<dbReference type="GeneID" id="93777396"/>
<dbReference type="KEGG" id="ecw:EcE24377A_0041"/>
<dbReference type="HOGENOM" id="CLU_018204_0_2_6"/>
<dbReference type="UniPathway" id="UPA00117"/>
<dbReference type="Proteomes" id="UP000001122">
    <property type="component" value="Chromosome"/>
</dbReference>
<dbReference type="GO" id="GO:0005737">
    <property type="term" value="C:cytoplasm"/>
    <property type="evidence" value="ECO:0007669"/>
    <property type="project" value="UniProtKB-SubCell"/>
</dbReference>
<dbReference type="GO" id="GO:0003995">
    <property type="term" value="F:acyl-CoA dehydrogenase activity"/>
    <property type="evidence" value="ECO:0007669"/>
    <property type="project" value="InterPro"/>
</dbReference>
<dbReference type="GO" id="GO:0050660">
    <property type="term" value="F:flavin adenine dinucleotide binding"/>
    <property type="evidence" value="ECO:0007669"/>
    <property type="project" value="InterPro"/>
</dbReference>
<dbReference type="GO" id="GO:0009437">
    <property type="term" value="P:carnitine metabolic process"/>
    <property type="evidence" value="ECO:0007669"/>
    <property type="project" value="UniProtKB-UniRule"/>
</dbReference>
<dbReference type="CDD" id="cd00567">
    <property type="entry name" value="ACAD"/>
    <property type="match status" value="1"/>
</dbReference>
<dbReference type="FunFam" id="1.20.140.10:FF:000001">
    <property type="entry name" value="Acyl-CoA dehydrogenase"/>
    <property type="match status" value="1"/>
</dbReference>
<dbReference type="FunFam" id="2.40.110.10:FF:000002">
    <property type="entry name" value="Acyl-CoA dehydrogenase fadE12"/>
    <property type="match status" value="1"/>
</dbReference>
<dbReference type="FunFam" id="1.10.540.10:FF:000005">
    <property type="entry name" value="Crotonobetainyl-CoA reductase"/>
    <property type="match status" value="1"/>
</dbReference>
<dbReference type="Gene3D" id="1.10.540.10">
    <property type="entry name" value="Acyl-CoA dehydrogenase/oxidase, N-terminal domain"/>
    <property type="match status" value="1"/>
</dbReference>
<dbReference type="Gene3D" id="2.40.110.10">
    <property type="entry name" value="Butyryl-CoA Dehydrogenase, subunit A, domain 2"/>
    <property type="match status" value="1"/>
</dbReference>
<dbReference type="Gene3D" id="1.20.140.10">
    <property type="entry name" value="Butyryl-CoA Dehydrogenase, subunit A, domain 3"/>
    <property type="match status" value="1"/>
</dbReference>
<dbReference type="HAMAP" id="MF_01052">
    <property type="entry name" value="CaiA"/>
    <property type="match status" value="1"/>
</dbReference>
<dbReference type="InterPro" id="IPR006089">
    <property type="entry name" value="Acyl-CoA_DH_CS"/>
</dbReference>
<dbReference type="InterPro" id="IPR006091">
    <property type="entry name" value="Acyl-CoA_Oxase/DH_mid-dom"/>
</dbReference>
<dbReference type="InterPro" id="IPR046373">
    <property type="entry name" value="Acyl-CoA_Oxase/DH_mid-dom_sf"/>
</dbReference>
<dbReference type="InterPro" id="IPR036250">
    <property type="entry name" value="AcylCo_DH-like_C"/>
</dbReference>
<dbReference type="InterPro" id="IPR009075">
    <property type="entry name" value="AcylCo_DH/oxidase_C"/>
</dbReference>
<dbReference type="InterPro" id="IPR013786">
    <property type="entry name" value="AcylCoA_DH/ox_N"/>
</dbReference>
<dbReference type="InterPro" id="IPR037069">
    <property type="entry name" value="AcylCoA_DH/ox_N_sf"/>
</dbReference>
<dbReference type="InterPro" id="IPR009100">
    <property type="entry name" value="AcylCoA_DH/oxidase_NM_dom_sf"/>
</dbReference>
<dbReference type="InterPro" id="IPR023450">
    <property type="entry name" value="CaiA"/>
</dbReference>
<dbReference type="NCBIfam" id="NF002885">
    <property type="entry name" value="PRK03354.1"/>
    <property type="match status" value="1"/>
</dbReference>
<dbReference type="PANTHER" id="PTHR43884">
    <property type="entry name" value="ACYL-COA DEHYDROGENASE"/>
    <property type="match status" value="1"/>
</dbReference>
<dbReference type="PANTHER" id="PTHR43884:SF12">
    <property type="entry name" value="ISOVALERYL-COA DEHYDROGENASE, MITOCHONDRIAL-RELATED"/>
    <property type="match status" value="1"/>
</dbReference>
<dbReference type="Pfam" id="PF00441">
    <property type="entry name" value="Acyl-CoA_dh_1"/>
    <property type="match status" value="1"/>
</dbReference>
<dbReference type="Pfam" id="PF02770">
    <property type="entry name" value="Acyl-CoA_dh_M"/>
    <property type="match status" value="1"/>
</dbReference>
<dbReference type="Pfam" id="PF02771">
    <property type="entry name" value="Acyl-CoA_dh_N"/>
    <property type="match status" value="1"/>
</dbReference>
<dbReference type="PIRSF" id="PIRSF016578">
    <property type="entry name" value="HsaA"/>
    <property type="match status" value="1"/>
</dbReference>
<dbReference type="SUPFAM" id="SSF47203">
    <property type="entry name" value="Acyl-CoA dehydrogenase C-terminal domain-like"/>
    <property type="match status" value="1"/>
</dbReference>
<dbReference type="SUPFAM" id="SSF56645">
    <property type="entry name" value="Acyl-CoA dehydrogenase NM domain-like"/>
    <property type="match status" value="1"/>
</dbReference>
<dbReference type="PROSITE" id="PS00072">
    <property type="entry name" value="ACYL_COA_DH_1"/>
    <property type="match status" value="1"/>
</dbReference>
<dbReference type="PROSITE" id="PS00073">
    <property type="entry name" value="ACYL_COA_DH_2"/>
    <property type="match status" value="1"/>
</dbReference>
<reference key="1">
    <citation type="journal article" date="2008" name="J. Bacteriol.">
        <title>The pangenome structure of Escherichia coli: comparative genomic analysis of E. coli commensal and pathogenic isolates.</title>
        <authorList>
            <person name="Rasko D.A."/>
            <person name="Rosovitz M.J."/>
            <person name="Myers G.S.A."/>
            <person name="Mongodin E.F."/>
            <person name="Fricke W.F."/>
            <person name="Gajer P."/>
            <person name="Crabtree J."/>
            <person name="Sebaihia M."/>
            <person name="Thomson N.R."/>
            <person name="Chaudhuri R."/>
            <person name="Henderson I.R."/>
            <person name="Sperandio V."/>
            <person name="Ravel J."/>
        </authorList>
    </citation>
    <scope>NUCLEOTIDE SEQUENCE [LARGE SCALE GENOMIC DNA]</scope>
    <source>
        <strain>E24377A / ETEC</strain>
    </source>
</reference>
<gene>
    <name evidence="1" type="primary">caiA</name>
    <name type="ordered locus">EcE24377A_0041</name>
</gene>
<protein>
    <recommendedName>
        <fullName evidence="1">Crotonobetainyl-CoA reductase</fullName>
        <ecNumber evidence="1">1.3.8.13</ecNumber>
    </recommendedName>
    <alternativeName>
        <fullName evidence="1">Crotonobetainyl-CoA dehydrogenase</fullName>
    </alternativeName>
</protein>
<accession>A7ZHD0</accession>
<evidence type="ECO:0000255" key="1">
    <source>
        <dbReference type="HAMAP-Rule" id="MF_01052"/>
    </source>
</evidence>
<comment type="function">
    <text evidence="1">Catalyzes the reduction of crotonobetainyl-CoA to gamma-butyrobetainyl-CoA.</text>
</comment>
<comment type="catalytic activity">
    <reaction evidence="1">
        <text>4-(trimethylamino)butanoyl-CoA + oxidized [electron-transfer flavoprotein] + H(+) = crotonobetainyl-CoA + reduced [electron-transfer flavoprotein]</text>
        <dbReference type="Rhea" id="RHEA:51584"/>
        <dbReference type="Rhea" id="RHEA-COMP:10685"/>
        <dbReference type="Rhea" id="RHEA-COMP:10686"/>
        <dbReference type="ChEBI" id="CHEBI:15378"/>
        <dbReference type="ChEBI" id="CHEBI:57692"/>
        <dbReference type="ChEBI" id="CHEBI:58307"/>
        <dbReference type="ChEBI" id="CHEBI:60933"/>
        <dbReference type="ChEBI" id="CHEBI:61513"/>
        <dbReference type="EC" id="1.3.8.13"/>
    </reaction>
</comment>
<comment type="cofactor">
    <cofactor evidence="1">
        <name>FAD</name>
        <dbReference type="ChEBI" id="CHEBI:57692"/>
    </cofactor>
</comment>
<comment type="pathway">
    <text evidence="1">Amine and polyamine metabolism; carnitine metabolism.</text>
</comment>
<comment type="subunit">
    <text evidence="1">Homotetramer.</text>
</comment>
<comment type="subcellular location">
    <subcellularLocation>
        <location evidence="1">Cytoplasm</location>
    </subcellularLocation>
</comment>
<comment type="similarity">
    <text evidence="1">Belongs to the acyl-CoA dehydrogenase family.</text>
</comment>